<name>PNP_BUCCC</name>
<gene>
    <name evidence="1" type="primary">pnp</name>
    <name type="ordered locus">BCc_227</name>
</gene>
<accession>Q057K3</accession>
<protein>
    <recommendedName>
        <fullName evidence="1">Polyribonucleotide nucleotidyltransferase</fullName>
        <ecNumber evidence="1">2.7.7.8</ecNumber>
    </recommendedName>
    <alternativeName>
        <fullName evidence="1">Polynucleotide phosphorylase</fullName>
        <shortName evidence="1">PNPase</shortName>
    </alternativeName>
</protein>
<evidence type="ECO:0000255" key="1">
    <source>
        <dbReference type="HAMAP-Rule" id="MF_01595"/>
    </source>
</evidence>
<sequence>MLKPIIHKFKYGKHNIILETGVIARQATASVLASMDDTTVLITIVSDNTTIPGQKFFPLVVNYQERTYAAGRIPGGFFRREGRPSENEILISRLIDRPIRPLFPKDFLYEVQIIATVISVNPQINPDIISIIGSSAALCLSGLPFLGPIGAARIGFLNNKYILNPSIEKIKKSSLDLVVSGTKNTIFMVEAEASILSEDNILNAILFGHESQQSLIDNIYLFSDKANKIPNIYKNIYKPDKQIFNLISKKIKKDINKAYYILKKKERLKKLNDIKQKVTSELLNNDSQLTSSKIEESIYFLERNIVRKRILKGKLRIDGRINNEVRKIDVRTGILPRVHGSALFTRGETQALVSATLGTSRDAQNLDDLLGDRTDNFLFHYNFPPYSVGEIGIVGSPKRREIGHGKLAKRSFLAVMPNIEDFPYTIRLVSEITESNGSSSMASVCGASLALMDAGVPIKSAIAGIAMGLIKENDSYIILSDILGDEDYLGDMDFKVSGSRLGITALQMDIKVSGITSDIIRSALYQAKSARLKILDIMENTLQIPRSDISKFAPRIYTIKINPEKIKDVIGKGGSIIRMLTEETGTVIEIKDDGIVKISAINGEKAKYAIKRIQEITEDIQIGKIYSGKVTRILDFGAFVSIGFGKEGLIHISQISNKRIDKVINHLKINQIIFVKVLEVDRQGRIRLSMKNI</sequence>
<reference key="1">
    <citation type="journal article" date="2006" name="Science">
        <title>A small microbial genome: the end of a long symbiotic relationship?</title>
        <authorList>
            <person name="Perez-Brocal V."/>
            <person name="Gil R."/>
            <person name="Ramos S."/>
            <person name="Lamelas A."/>
            <person name="Postigo M."/>
            <person name="Michelena J.M."/>
            <person name="Silva F.J."/>
            <person name="Moya A."/>
            <person name="Latorre A."/>
        </authorList>
    </citation>
    <scope>NUCLEOTIDE SEQUENCE [LARGE SCALE GENOMIC DNA]</scope>
    <source>
        <strain>Cc</strain>
    </source>
</reference>
<proteinExistence type="inferred from homology"/>
<dbReference type="EC" id="2.7.7.8" evidence="1"/>
<dbReference type="EMBL" id="CP000263">
    <property type="protein sequence ID" value="ABJ90696.1"/>
    <property type="molecule type" value="Genomic_DNA"/>
</dbReference>
<dbReference type="RefSeq" id="WP_011672615.1">
    <property type="nucleotide sequence ID" value="NC_008513.1"/>
</dbReference>
<dbReference type="SMR" id="Q057K3"/>
<dbReference type="STRING" id="372461.BCc_227"/>
<dbReference type="KEGG" id="bcc:BCc_227"/>
<dbReference type="eggNOG" id="COG1185">
    <property type="taxonomic scope" value="Bacteria"/>
</dbReference>
<dbReference type="HOGENOM" id="CLU_004217_2_2_6"/>
<dbReference type="OrthoDB" id="9804305at2"/>
<dbReference type="Proteomes" id="UP000000669">
    <property type="component" value="Chromosome"/>
</dbReference>
<dbReference type="GO" id="GO:0005829">
    <property type="term" value="C:cytosol"/>
    <property type="evidence" value="ECO:0007669"/>
    <property type="project" value="TreeGrafter"/>
</dbReference>
<dbReference type="GO" id="GO:0000175">
    <property type="term" value="F:3'-5'-RNA exonuclease activity"/>
    <property type="evidence" value="ECO:0007669"/>
    <property type="project" value="TreeGrafter"/>
</dbReference>
<dbReference type="GO" id="GO:0000287">
    <property type="term" value="F:magnesium ion binding"/>
    <property type="evidence" value="ECO:0007669"/>
    <property type="project" value="UniProtKB-UniRule"/>
</dbReference>
<dbReference type="GO" id="GO:0004654">
    <property type="term" value="F:polyribonucleotide nucleotidyltransferase activity"/>
    <property type="evidence" value="ECO:0007669"/>
    <property type="project" value="UniProtKB-UniRule"/>
</dbReference>
<dbReference type="GO" id="GO:0003723">
    <property type="term" value="F:RNA binding"/>
    <property type="evidence" value="ECO:0007669"/>
    <property type="project" value="UniProtKB-UniRule"/>
</dbReference>
<dbReference type="GO" id="GO:0006402">
    <property type="term" value="P:mRNA catabolic process"/>
    <property type="evidence" value="ECO:0007669"/>
    <property type="project" value="UniProtKB-UniRule"/>
</dbReference>
<dbReference type="GO" id="GO:0006396">
    <property type="term" value="P:RNA processing"/>
    <property type="evidence" value="ECO:0007669"/>
    <property type="project" value="InterPro"/>
</dbReference>
<dbReference type="CDD" id="cd02393">
    <property type="entry name" value="KH-I_PNPase"/>
    <property type="match status" value="1"/>
</dbReference>
<dbReference type="CDD" id="cd11363">
    <property type="entry name" value="RNase_PH_PNPase_1"/>
    <property type="match status" value="1"/>
</dbReference>
<dbReference type="CDD" id="cd11364">
    <property type="entry name" value="RNase_PH_PNPase_2"/>
    <property type="match status" value="1"/>
</dbReference>
<dbReference type="CDD" id="cd04472">
    <property type="entry name" value="S1_PNPase"/>
    <property type="match status" value="1"/>
</dbReference>
<dbReference type="FunFam" id="2.40.50.140:FF:000023">
    <property type="entry name" value="Polyribonucleotide nucleotidyltransferase"/>
    <property type="match status" value="1"/>
</dbReference>
<dbReference type="FunFam" id="3.30.1370.10:FF:000001">
    <property type="entry name" value="Polyribonucleotide nucleotidyltransferase"/>
    <property type="match status" value="1"/>
</dbReference>
<dbReference type="FunFam" id="3.30.230.70:FF:000001">
    <property type="entry name" value="Polyribonucleotide nucleotidyltransferase"/>
    <property type="match status" value="1"/>
</dbReference>
<dbReference type="FunFam" id="3.30.230.70:FF:000002">
    <property type="entry name" value="Polyribonucleotide nucleotidyltransferase"/>
    <property type="match status" value="1"/>
</dbReference>
<dbReference type="Gene3D" id="3.30.230.70">
    <property type="entry name" value="GHMP Kinase, N-terminal domain"/>
    <property type="match status" value="2"/>
</dbReference>
<dbReference type="Gene3D" id="3.30.1370.10">
    <property type="entry name" value="K Homology domain, type 1"/>
    <property type="match status" value="1"/>
</dbReference>
<dbReference type="Gene3D" id="2.40.50.140">
    <property type="entry name" value="Nucleic acid-binding proteins"/>
    <property type="match status" value="1"/>
</dbReference>
<dbReference type="HAMAP" id="MF_01595">
    <property type="entry name" value="PNPase"/>
    <property type="match status" value="1"/>
</dbReference>
<dbReference type="InterPro" id="IPR001247">
    <property type="entry name" value="ExoRNase_PH_dom1"/>
</dbReference>
<dbReference type="InterPro" id="IPR015847">
    <property type="entry name" value="ExoRNase_PH_dom2"/>
</dbReference>
<dbReference type="InterPro" id="IPR036345">
    <property type="entry name" value="ExoRNase_PH_dom2_sf"/>
</dbReference>
<dbReference type="InterPro" id="IPR004087">
    <property type="entry name" value="KH_dom"/>
</dbReference>
<dbReference type="InterPro" id="IPR004088">
    <property type="entry name" value="KH_dom_type_1"/>
</dbReference>
<dbReference type="InterPro" id="IPR036612">
    <property type="entry name" value="KH_dom_type_1_sf"/>
</dbReference>
<dbReference type="InterPro" id="IPR012340">
    <property type="entry name" value="NA-bd_OB-fold"/>
</dbReference>
<dbReference type="InterPro" id="IPR012162">
    <property type="entry name" value="PNPase"/>
</dbReference>
<dbReference type="InterPro" id="IPR027408">
    <property type="entry name" value="PNPase/RNase_PH_dom_sf"/>
</dbReference>
<dbReference type="InterPro" id="IPR015848">
    <property type="entry name" value="PNPase_PH_RNA-bd_bac/org-type"/>
</dbReference>
<dbReference type="InterPro" id="IPR036456">
    <property type="entry name" value="PNPase_PH_RNA-bd_sf"/>
</dbReference>
<dbReference type="InterPro" id="IPR020568">
    <property type="entry name" value="Ribosomal_Su5_D2-typ_SF"/>
</dbReference>
<dbReference type="InterPro" id="IPR003029">
    <property type="entry name" value="S1_domain"/>
</dbReference>
<dbReference type="NCBIfam" id="TIGR03591">
    <property type="entry name" value="polynuc_phos"/>
    <property type="match status" value="1"/>
</dbReference>
<dbReference type="NCBIfam" id="NF008805">
    <property type="entry name" value="PRK11824.1"/>
    <property type="match status" value="1"/>
</dbReference>
<dbReference type="PANTHER" id="PTHR11252">
    <property type="entry name" value="POLYRIBONUCLEOTIDE NUCLEOTIDYLTRANSFERASE"/>
    <property type="match status" value="1"/>
</dbReference>
<dbReference type="PANTHER" id="PTHR11252:SF0">
    <property type="entry name" value="POLYRIBONUCLEOTIDE NUCLEOTIDYLTRANSFERASE 1, MITOCHONDRIAL"/>
    <property type="match status" value="1"/>
</dbReference>
<dbReference type="Pfam" id="PF00013">
    <property type="entry name" value="KH_1"/>
    <property type="match status" value="1"/>
</dbReference>
<dbReference type="Pfam" id="PF03726">
    <property type="entry name" value="PNPase"/>
    <property type="match status" value="1"/>
</dbReference>
<dbReference type="Pfam" id="PF01138">
    <property type="entry name" value="RNase_PH"/>
    <property type="match status" value="2"/>
</dbReference>
<dbReference type="Pfam" id="PF03725">
    <property type="entry name" value="RNase_PH_C"/>
    <property type="match status" value="1"/>
</dbReference>
<dbReference type="Pfam" id="PF00575">
    <property type="entry name" value="S1"/>
    <property type="match status" value="1"/>
</dbReference>
<dbReference type="PIRSF" id="PIRSF005499">
    <property type="entry name" value="PNPase"/>
    <property type="match status" value="1"/>
</dbReference>
<dbReference type="SMART" id="SM00322">
    <property type="entry name" value="KH"/>
    <property type="match status" value="1"/>
</dbReference>
<dbReference type="SMART" id="SM00316">
    <property type="entry name" value="S1"/>
    <property type="match status" value="1"/>
</dbReference>
<dbReference type="SUPFAM" id="SSF54791">
    <property type="entry name" value="Eukaryotic type KH-domain (KH-domain type I)"/>
    <property type="match status" value="1"/>
</dbReference>
<dbReference type="SUPFAM" id="SSF50249">
    <property type="entry name" value="Nucleic acid-binding proteins"/>
    <property type="match status" value="1"/>
</dbReference>
<dbReference type="SUPFAM" id="SSF46915">
    <property type="entry name" value="Polynucleotide phosphorylase/guanosine pentaphosphate synthase (PNPase/GPSI), domain 3"/>
    <property type="match status" value="1"/>
</dbReference>
<dbReference type="SUPFAM" id="SSF55666">
    <property type="entry name" value="Ribonuclease PH domain 2-like"/>
    <property type="match status" value="2"/>
</dbReference>
<dbReference type="SUPFAM" id="SSF54211">
    <property type="entry name" value="Ribosomal protein S5 domain 2-like"/>
    <property type="match status" value="2"/>
</dbReference>
<dbReference type="PROSITE" id="PS50084">
    <property type="entry name" value="KH_TYPE_1"/>
    <property type="match status" value="1"/>
</dbReference>
<dbReference type="PROSITE" id="PS50126">
    <property type="entry name" value="S1"/>
    <property type="match status" value="1"/>
</dbReference>
<feature type="chain" id="PRO_0000329550" description="Polyribonucleotide nucleotidyltransferase">
    <location>
        <begin position="1"/>
        <end position="693"/>
    </location>
</feature>
<feature type="domain" description="KH" evidence="1">
    <location>
        <begin position="554"/>
        <end position="613"/>
    </location>
</feature>
<feature type="domain" description="S1 motif" evidence="1">
    <location>
        <begin position="623"/>
        <end position="691"/>
    </location>
</feature>
<feature type="binding site" evidence="1">
    <location>
        <position position="487"/>
    </location>
    <ligand>
        <name>Mg(2+)</name>
        <dbReference type="ChEBI" id="CHEBI:18420"/>
    </ligand>
</feature>
<feature type="binding site" evidence="1">
    <location>
        <position position="493"/>
    </location>
    <ligand>
        <name>Mg(2+)</name>
        <dbReference type="ChEBI" id="CHEBI:18420"/>
    </ligand>
</feature>
<organism>
    <name type="scientific">Buchnera aphidicola subsp. Cinara cedri (strain Cc)</name>
    <dbReference type="NCBI Taxonomy" id="372461"/>
    <lineage>
        <taxon>Bacteria</taxon>
        <taxon>Pseudomonadati</taxon>
        <taxon>Pseudomonadota</taxon>
        <taxon>Gammaproteobacteria</taxon>
        <taxon>Enterobacterales</taxon>
        <taxon>Erwiniaceae</taxon>
        <taxon>Buchnera</taxon>
    </lineage>
</organism>
<comment type="function">
    <text evidence="1">Involved in mRNA degradation. Catalyzes the phosphorolysis of single-stranded polyribonucleotides processively in the 3'- to 5'-direction.</text>
</comment>
<comment type="catalytic activity">
    <reaction evidence="1">
        <text>RNA(n+1) + phosphate = RNA(n) + a ribonucleoside 5'-diphosphate</text>
        <dbReference type="Rhea" id="RHEA:22096"/>
        <dbReference type="Rhea" id="RHEA-COMP:14527"/>
        <dbReference type="Rhea" id="RHEA-COMP:17342"/>
        <dbReference type="ChEBI" id="CHEBI:43474"/>
        <dbReference type="ChEBI" id="CHEBI:57930"/>
        <dbReference type="ChEBI" id="CHEBI:140395"/>
        <dbReference type="EC" id="2.7.7.8"/>
    </reaction>
</comment>
<comment type="cofactor">
    <cofactor evidence="1">
        <name>Mg(2+)</name>
        <dbReference type="ChEBI" id="CHEBI:18420"/>
    </cofactor>
</comment>
<comment type="subunit">
    <text evidence="1">Component of the RNA degradosome, which is a multiprotein complex involved in RNA processing and mRNA degradation.</text>
</comment>
<comment type="subcellular location">
    <subcellularLocation>
        <location evidence="1">Cytoplasm</location>
    </subcellularLocation>
</comment>
<comment type="similarity">
    <text evidence="1">Belongs to the polyribonucleotide nucleotidyltransferase family.</text>
</comment>
<keyword id="KW-0963">Cytoplasm</keyword>
<keyword id="KW-0460">Magnesium</keyword>
<keyword id="KW-0479">Metal-binding</keyword>
<keyword id="KW-0548">Nucleotidyltransferase</keyword>
<keyword id="KW-1185">Reference proteome</keyword>
<keyword id="KW-0694">RNA-binding</keyword>
<keyword id="KW-0808">Transferase</keyword>